<reference key="1">
    <citation type="journal article" date="2003" name="Nature">
        <title>Genome sequence of Bacillus cereus and comparative analysis with Bacillus anthracis.</title>
        <authorList>
            <person name="Ivanova N."/>
            <person name="Sorokin A."/>
            <person name="Anderson I."/>
            <person name="Galleron N."/>
            <person name="Candelon B."/>
            <person name="Kapatral V."/>
            <person name="Bhattacharyya A."/>
            <person name="Reznik G."/>
            <person name="Mikhailova N."/>
            <person name="Lapidus A."/>
            <person name="Chu L."/>
            <person name="Mazur M."/>
            <person name="Goltsman E."/>
            <person name="Larsen N."/>
            <person name="D'Souza M."/>
            <person name="Walunas T."/>
            <person name="Grechkin Y."/>
            <person name="Pusch G."/>
            <person name="Haselkorn R."/>
            <person name="Fonstein M."/>
            <person name="Ehrlich S.D."/>
            <person name="Overbeek R."/>
            <person name="Kyrpides N.C."/>
        </authorList>
    </citation>
    <scope>NUCLEOTIDE SEQUENCE [LARGE SCALE GENOMIC DNA]</scope>
    <source>
        <strain>ATCC 14579 / DSM 31 / CCUG 7414 / JCM 2152 / NBRC 15305 / NCIMB 9373 / NCTC 2599 / NRRL B-3711</strain>
    </source>
</reference>
<feature type="chain" id="PRO_0000172737" description="UPF0180 protein BC_1394">
    <location>
        <begin position="1"/>
        <end position="82"/>
    </location>
</feature>
<comment type="similarity">
    <text evidence="1">Belongs to the UPF0180 family.</text>
</comment>
<dbReference type="EMBL" id="AE016877">
    <property type="protein sequence ID" value="AAP08376.1"/>
    <property type="molecule type" value="Genomic_DNA"/>
</dbReference>
<dbReference type="RefSeq" id="NP_831175.1">
    <property type="nucleotide sequence ID" value="NC_004722.1"/>
</dbReference>
<dbReference type="STRING" id="226900.BC_1394"/>
<dbReference type="KEGG" id="bce:BC1394"/>
<dbReference type="PATRIC" id="fig|226900.8.peg.1369"/>
<dbReference type="HOGENOM" id="CLU_187365_0_0_9"/>
<dbReference type="Proteomes" id="UP000001417">
    <property type="component" value="Chromosome"/>
</dbReference>
<dbReference type="HAMAP" id="MF_00506">
    <property type="entry name" value="UPF0180"/>
    <property type="match status" value="1"/>
</dbReference>
<dbReference type="InterPro" id="IPR005370">
    <property type="entry name" value="UPF0180"/>
</dbReference>
<dbReference type="NCBIfam" id="NF002845">
    <property type="entry name" value="PRK03094.1"/>
    <property type="match status" value="1"/>
</dbReference>
<dbReference type="Pfam" id="PF03698">
    <property type="entry name" value="UPF0180"/>
    <property type="match status" value="1"/>
</dbReference>
<sequence>MRIMARIGVENSLTDVQQALQQQGHEVVTLNSEQDAQGCDCCVVTGQDSNVMGIADTSIKGSVITAHGLTTDEICQQVESRT</sequence>
<keyword id="KW-1185">Reference proteome</keyword>
<accession>Q81G17</accession>
<name>Y1394_BACCR</name>
<protein>
    <recommendedName>
        <fullName evidence="1">UPF0180 protein BC_1394</fullName>
    </recommendedName>
</protein>
<evidence type="ECO:0000255" key="1">
    <source>
        <dbReference type="HAMAP-Rule" id="MF_00506"/>
    </source>
</evidence>
<proteinExistence type="inferred from homology"/>
<organism>
    <name type="scientific">Bacillus cereus (strain ATCC 14579 / DSM 31 / CCUG 7414 / JCM 2152 / NBRC 15305 / NCIMB 9373 / NCTC 2599 / NRRL B-3711)</name>
    <dbReference type="NCBI Taxonomy" id="226900"/>
    <lineage>
        <taxon>Bacteria</taxon>
        <taxon>Bacillati</taxon>
        <taxon>Bacillota</taxon>
        <taxon>Bacilli</taxon>
        <taxon>Bacillales</taxon>
        <taxon>Bacillaceae</taxon>
        <taxon>Bacillus</taxon>
        <taxon>Bacillus cereus group</taxon>
    </lineage>
</organism>
<gene>
    <name type="ordered locus">BC_1394</name>
</gene>